<reference key="1">
    <citation type="journal article" date="2008" name="Genome Res.">
        <title>Comparative genome analysis of Salmonella enteritidis PT4 and Salmonella gallinarum 287/91 provides insights into evolutionary and host adaptation pathways.</title>
        <authorList>
            <person name="Thomson N.R."/>
            <person name="Clayton D.J."/>
            <person name="Windhorst D."/>
            <person name="Vernikos G."/>
            <person name="Davidson S."/>
            <person name="Churcher C."/>
            <person name="Quail M.A."/>
            <person name="Stevens M."/>
            <person name="Jones M.A."/>
            <person name="Watson M."/>
            <person name="Barron A."/>
            <person name="Layton A."/>
            <person name="Pickard D."/>
            <person name="Kingsley R.A."/>
            <person name="Bignell A."/>
            <person name="Clark L."/>
            <person name="Harris B."/>
            <person name="Ormond D."/>
            <person name="Abdellah Z."/>
            <person name="Brooks K."/>
            <person name="Cherevach I."/>
            <person name="Chillingworth T."/>
            <person name="Woodward J."/>
            <person name="Norberczak H."/>
            <person name="Lord A."/>
            <person name="Arrowsmith C."/>
            <person name="Jagels K."/>
            <person name="Moule S."/>
            <person name="Mungall K."/>
            <person name="Saunders M."/>
            <person name="Whitehead S."/>
            <person name="Chabalgoity J.A."/>
            <person name="Maskell D."/>
            <person name="Humphreys T."/>
            <person name="Roberts M."/>
            <person name="Barrow P.A."/>
            <person name="Dougan G."/>
            <person name="Parkhill J."/>
        </authorList>
    </citation>
    <scope>NUCLEOTIDE SEQUENCE [LARGE SCALE GENOMIC DNA]</scope>
    <source>
        <strain>287/91 / NCTC 13346</strain>
    </source>
</reference>
<name>5DNU_SALG2</name>
<accession>B5RCF7</accession>
<comment type="function">
    <text evidence="1">Catalyzes the strictly specific dephosphorylation of 2'-deoxyribonucleoside 5'-monophosphates.</text>
</comment>
<comment type="catalytic activity">
    <reaction evidence="1">
        <text>a 2'-deoxyribonucleoside 5'-phosphate + H2O = a 2'-deoxyribonucleoside + phosphate</text>
        <dbReference type="Rhea" id="RHEA:36167"/>
        <dbReference type="ChEBI" id="CHEBI:15377"/>
        <dbReference type="ChEBI" id="CHEBI:18274"/>
        <dbReference type="ChEBI" id="CHEBI:43474"/>
        <dbReference type="ChEBI" id="CHEBI:65317"/>
        <dbReference type="EC" id="3.1.3.89"/>
    </reaction>
</comment>
<comment type="cofactor">
    <cofactor evidence="1">
        <name>a divalent metal cation</name>
        <dbReference type="ChEBI" id="CHEBI:60240"/>
    </cofactor>
</comment>
<comment type="subunit">
    <text evidence="1">Homodimer.</text>
</comment>
<comment type="subcellular location">
    <subcellularLocation>
        <location evidence="1">Cytoplasm</location>
    </subcellularLocation>
</comment>
<comment type="similarity">
    <text evidence="1">Belongs to the 5DNU family.</text>
</comment>
<evidence type="ECO:0000255" key="1">
    <source>
        <dbReference type="HAMAP-Rule" id="MF_01100"/>
    </source>
</evidence>
<evidence type="ECO:0000255" key="2">
    <source>
        <dbReference type="PROSITE-ProRule" id="PRU01175"/>
    </source>
</evidence>
<dbReference type="EC" id="3.1.3.89" evidence="1"/>
<dbReference type="EMBL" id="AM933173">
    <property type="protein sequence ID" value="CAR38191.1"/>
    <property type="molecule type" value="Genomic_DNA"/>
</dbReference>
<dbReference type="RefSeq" id="WP_000813882.1">
    <property type="nucleotide sequence ID" value="NC_011274.1"/>
</dbReference>
<dbReference type="SMR" id="B5RCF7"/>
<dbReference type="KEGG" id="seg:SG2361"/>
<dbReference type="HOGENOM" id="CLU_084784_0_0_6"/>
<dbReference type="Proteomes" id="UP000008321">
    <property type="component" value="Chromosome"/>
</dbReference>
<dbReference type="GO" id="GO:0005737">
    <property type="term" value="C:cytoplasm"/>
    <property type="evidence" value="ECO:0007669"/>
    <property type="project" value="UniProtKB-SubCell"/>
</dbReference>
<dbReference type="GO" id="GO:0002953">
    <property type="term" value="F:5'-deoxynucleotidase activity"/>
    <property type="evidence" value="ECO:0007669"/>
    <property type="project" value="UniProtKB-EC"/>
</dbReference>
<dbReference type="GO" id="GO:0046872">
    <property type="term" value="F:metal ion binding"/>
    <property type="evidence" value="ECO:0007669"/>
    <property type="project" value="UniProtKB-KW"/>
</dbReference>
<dbReference type="GO" id="GO:0000166">
    <property type="term" value="F:nucleotide binding"/>
    <property type="evidence" value="ECO:0007669"/>
    <property type="project" value="UniProtKB-KW"/>
</dbReference>
<dbReference type="FunFam" id="1.10.3210.10:FF:000002">
    <property type="entry name" value="Nucleotidase YfbR"/>
    <property type="match status" value="1"/>
</dbReference>
<dbReference type="Gene3D" id="1.10.3210.10">
    <property type="entry name" value="Hypothetical protein af1432"/>
    <property type="match status" value="1"/>
</dbReference>
<dbReference type="HAMAP" id="MF_01100">
    <property type="entry name" value="5DNU"/>
    <property type="match status" value="1"/>
</dbReference>
<dbReference type="InterPro" id="IPR003607">
    <property type="entry name" value="HD/PDEase_dom"/>
</dbReference>
<dbReference type="InterPro" id="IPR006674">
    <property type="entry name" value="HD_domain"/>
</dbReference>
<dbReference type="InterPro" id="IPR022971">
    <property type="entry name" value="YfbR"/>
</dbReference>
<dbReference type="InterPro" id="IPR039356">
    <property type="entry name" value="YfbR/HDDC2"/>
</dbReference>
<dbReference type="NCBIfam" id="NF003009">
    <property type="entry name" value="PRK03826.1"/>
    <property type="match status" value="1"/>
</dbReference>
<dbReference type="PANTHER" id="PTHR11845">
    <property type="entry name" value="5'-DEOXYNUCLEOTIDASE HDDC2"/>
    <property type="match status" value="1"/>
</dbReference>
<dbReference type="PANTHER" id="PTHR11845:SF13">
    <property type="entry name" value="5'-DEOXYNUCLEOTIDASE HDDC2"/>
    <property type="match status" value="1"/>
</dbReference>
<dbReference type="Pfam" id="PF12917">
    <property type="entry name" value="YfbR-like"/>
    <property type="match status" value="1"/>
</dbReference>
<dbReference type="SMART" id="SM00471">
    <property type="entry name" value="HDc"/>
    <property type="match status" value="1"/>
</dbReference>
<dbReference type="SUPFAM" id="SSF109604">
    <property type="entry name" value="HD-domain/PDEase-like"/>
    <property type="match status" value="1"/>
</dbReference>
<dbReference type="PROSITE" id="PS51831">
    <property type="entry name" value="HD"/>
    <property type="match status" value="1"/>
</dbReference>
<feature type="chain" id="PRO_1000136974" description="5'-deoxynucleotidase YfbR">
    <location>
        <begin position="1"/>
        <end position="199"/>
    </location>
</feature>
<feature type="domain" description="HD" evidence="2">
    <location>
        <begin position="30"/>
        <end position="142"/>
    </location>
</feature>
<feature type="binding site" evidence="1">
    <location>
        <begin position="18"/>
        <end position="19"/>
    </location>
    <ligand>
        <name>substrate</name>
    </ligand>
</feature>
<feature type="binding site" evidence="1">
    <location>
        <position position="33"/>
    </location>
    <ligand>
        <name>a divalent metal cation</name>
        <dbReference type="ChEBI" id="CHEBI:60240"/>
    </ligand>
</feature>
<feature type="binding site" evidence="1">
    <location>
        <position position="33"/>
    </location>
    <ligand>
        <name>substrate</name>
    </ligand>
</feature>
<feature type="binding site" evidence="1">
    <location>
        <position position="68"/>
    </location>
    <ligand>
        <name>a divalent metal cation</name>
        <dbReference type="ChEBI" id="CHEBI:60240"/>
    </ligand>
</feature>
<feature type="binding site" evidence="1">
    <location>
        <position position="69"/>
    </location>
    <ligand>
        <name>a divalent metal cation</name>
        <dbReference type="ChEBI" id="CHEBI:60240"/>
    </ligand>
</feature>
<feature type="binding site" evidence="1">
    <location>
        <position position="69"/>
    </location>
    <ligand>
        <name>substrate</name>
    </ligand>
</feature>
<feature type="binding site" evidence="1">
    <location>
        <begin position="77"/>
        <end position="80"/>
    </location>
    <ligand>
        <name>substrate</name>
    </ligand>
</feature>
<feature type="binding site" evidence="1">
    <location>
        <position position="137"/>
    </location>
    <ligand>
        <name>a divalent metal cation</name>
        <dbReference type="ChEBI" id="CHEBI:60240"/>
    </ligand>
</feature>
<feature type="binding site" evidence="1">
    <location>
        <position position="137"/>
    </location>
    <ligand>
        <name>substrate</name>
    </ligand>
</feature>
<feature type="site" description="Appears to be important in orienting the phosphate for catalysis" evidence="1">
    <location>
        <position position="18"/>
    </location>
</feature>
<protein>
    <recommendedName>
        <fullName evidence="1">5'-deoxynucleotidase YfbR</fullName>
        <ecNumber evidence="1">3.1.3.89</ecNumber>
    </recommendedName>
    <alternativeName>
        <fullName evidence="1">5'-deoxyribonucleotidase</fullName>
    </alternativeName>
    <alternativeName>
        <fullName evidence="1">Nucleoside 5'-monophosphate phosphohydrolase</fullName>
    </alternativeName>
</protein>
<gene>
    <name evidence="1" type="primary">yfbR</name>
    <name type="ordered locus">SG2361</name>
</gene>
<keyword id="KW-0963">Cytoplasm</keyword>
<keyword id="KW-0378">Hydrolase</keyword>
<keyword id="KW-0479">Metal-binding</keyword>
<keyword id="KW-0547">Nucleotide-binding</keyword>
<organism>
    <name type="scientific">Salmonella gallinarum (strain 287/91 / NCTC 13346)</name>
    <dbReference type="NCBI Taxonomy" id="550538"/>
    <lineage>
        <taxon>Bacteria</taxon>
        <taxon>Pseudomonadati</taxon>
        <taxon>Pseudomonadota</taxon>
        <taxon>Gammaproteobacteria</taxon>
        <taxon>Enterobacterales</taxon>
        <taxon>Enterobacteriaceae</taxon>
        <taxon>Salmonella</taxon>
    </lineage>
</organism>
<sequence length="199" mass="22697">MKQSHFFAHLSRMKLINRWPLMRNVRTENVSEHSLQVAMVAHALAAIKNRKFGGQLNAERIALLAMYHDASEVLTGDLPTPVKYFNSQIAQEYKAIEKIAQQKLVDMAPDELRDIFAPLIDENAWSEEEQAIVKQADALCAYLKCLEELSAGNNEFGLAKTRLEKTLELRRSQEMDYFMAVFVPSFHLSLDEISQDSPL</sequence>
<proteinExistence type="inferred from homology"/>